<evidence type="ECO:0000250" key="1"/>
<evidence type="ECO:0000250" key="2">
    <source>
        <dbReference type="UniProtKB" id="Q8BQU6"/>
    </source>
</evidence>
<evidence type="ECO:0000255" key="3"/>
<evidence type="ECO:0000256" key="4">
    <source>
        <dbReference type="SAM" id="MobiDB-lite"/>
    </source>
</evidence>
<evidence type="ECO:0000269" key="5">
    <source>
    </source>
</evidence>
<evidence type="ECO:0000269" key="6">
    <source>
    </source>
</evidence>
<evidence type="ECO:0000269" key="7">
    <source>
    </source>
</evidence>
<evidence type="ECO:0000305" key="8"/>
<sequence>MTNMSWSFLTRLLEEIHNHSTFVGKVWLTVLVVFRIVLTAVGGEAIYSDEQAKFTCNTRQPGCDNVCYDAFAPLSHVRFWVFQIVVISTPSVMYLGYAVHRLARASEQERRRALRRRPGPRRAPRAHLPPPHAGWPEPADLGEEEPMLGLGEEEEEEETGAAEGAGEEAEEAGAEEACTKAVGADGKAAGTPGPTGQHDGRRRIQREGLMRVYVAQLVARAAFEVAFLVGQYLLYGFEVRPFFPCSRQPCPHVVDCFVSRPTEKTVFLLVMYVVSCLCLLLNLCEMAHLGLGSAQDAVRGRRGPPASAPAPAPRPPPCAFPAAAAGLACPPDYSLVVRAAERARAHDQNLANLALQALRDGAAAGDRDRDSSPCVGLPAASRGPPRAGAPASRTGSATSAGTVGEQGRPGTHERPGAKPRAGSEKGSASSRDGKTTVWI</sequence>
<gene>
    <name type="primary">GJC2</name>
    <name type="synonym">GJA12</name>
</gene>
<organism>
    <name type="scientific">Homo sapiens</name>
    <name type="common">Human</name>
    <dbReference type="NCBI Taxonomy" id="9606"/>
    <lineage>
        <taxon>Eukaryota</taxon>
        <taxon>Metazoa</taxon>
        <taxon>Chordata</taxon>
        <taxon>Craniata</taxon>
        <taxon>Vertebrata</taxon>
        <taxon>Euteleostomi</taxon>
        <taxon>Mammalia</taxon>
        <taxon>Eutheria</taxon>
        <taxon>Euarchontoglires</taxon>
        <taxon>Primates</taxon>
        <taxon>Haplorrhini</taxon>
        <taxon>Catarrhini</taxon>
        <taxon>Hominidae</taxon>
        <taxon>Homo</taxon>
    </lineage>
</organism>
<proteinExistence type="evidence at protein level"/>
<accession>Q5T442</accession>
<accession>O43440</accession>
<accession>Q7Z7J2</accession>
<accession>Q8IWJ9</accession>
<comment type="function">
    <text evidence="5">One gap junction consists of a cluster of closely packed pairs of transmembrane channels, the connexons, through which materials of low MW diffuse from one cell to a neighboring cell. May play a role in myelination in central and peripheral nervous systems.</text>
</comment>
<comment type="subunit">
    <text evidence="1">A connexon is composed of a hexamer of connexins. Interacts with TJP1 (By similarity).</text>
</comment>
<comment type="subcellular location">
    <subcellularLocation>
        <location>Cell membrane</location>
        <topology>Multi-pass membrane protein</topology>
    </subcellularLocation>
    <subcellularLocation>
        <location>Cell junction</location>
        <location>Gap junction</location>
    </subcellularLocation>
</comment>
<comment type="tissue specificity">
    <text evidence="5">Expressed in central nervous system, in sciatic nerve and sural nerve. Also detected in skeletal muscles.</text>
</comment>
<comment type="disease" evidence="5">
    <disease id="DI-00649">
        <name>Leukodystrophy, hypomyelinating, 2</name>
        <acronym>HLD2</acronym>
        <description>An autosomal recessive hypomyelinating leukodystrophy with symptoms of Pelizaeus-Merzbacher disease. Clinically characterized by nystagmus, impaired motor development, ataxia, choreoathetotic movements, dysarthria, and progressive spasticity.</description>
        <dbReference type="MIM" id="608804"/>
    </disease>
    <text>The disease is caused by variants affecting the gene represented in this entry.</text>
</comment>
<comment type="disease" evidence="6">
    <disease id="DI-02587">
        <name>Spastic paraplegia 44, autosomal recessive</name>
        <acronym>SPG44</acronym>
        <description>A form of spastic paraplegia, a neurodegenerative disorder characterized by a slow, gradual, progressive weakness and spasticity of the lower limbs. Rate of progression and the severity of symptoms are quite variable. Initial symptoms may include difficulty with balance, weakness and stiffness in the legs, muscle spasms, and dragging the toes when walking. In some forms of the disorder, bladder symptoms (such as incontinence) may appear, or the weakness and stiffness may spread to other parts of the body.</description>
        <dbReference type="MIM" id="613206"/>
    </disease>
    <text>The disease is caused by variants affecting the gene represented in this entry.</text>
</comment>
<comment type="disease" evidence="7">
    <disease id="DI-02795">
        <name>Lymphatic malformation 3</name>
        <acronym>LMPHM3</acronym>
        <description>A form of primary lymphedema, a disease characterized by swelling of body parts due to developmental anomalies and functional defects of the lymphatic system. Patients with lymphedema may suffer from recurrent local infections. LMPHM3 is an autosomal dominant form with variable severity and reduced penetrance. Affected individuals manifest lymphedema of the lower limbs and some patients have lymphedema of the hands.</description>
        <dbReference type="MIM" id="613480"/>
    </disease>
    <text>The disease is caused by variants affecting the gene represented in this entry.</text>
</comment>
<comment type="similarity">
    <text evidence="8">Belongs to the connexin family. Gamma-type subfamily.</text>
</comment>
<comment type="caution">
    <text evidence="8">It is uncertain whether Met-1 or Met-4 is the initiator.</text>
</comment>
<comment type="sequence caution" evidence="8">
    <conflict type="erroneous initiation">
        <sequence resource="EMBL-CDS" id="AAB94511"/>
    </conflict>
    <text>Truncated N-terminus.</text>
</comment>
<comment type="sequence caution" evidence="8">
    <conflict type="erroneous initiation">
        <sequence resource="EMBL-CDS" id="AAH35840"/>
    </conflict>
    <text>Truncated N-terminus.</text>
</comment>
<feature type="chain" id="PRO_0000057842" description="Gap junction gamma-2 protein">
    <location>
        <begin position="1"/>
        <end position="439"/>
    </location>
</feature>
<feature type="topological domain" description="Cytoplasmic" evidence="3">
    <location>
        <begin position="1"/>
        <end position="25"/>
    </location>
</feature>
<feature type="transmembrane region" description="Helical" evidence="3">
    <location>
        <begin position="26"/>
        <end position="46"/>
    </location>
</feature>
<feature type="topological domain" description="Extracellular" evidence="3">
    <location>
        <begin position="47"/>
        <end position="78"/>
    </location>
</feature>
<feature type="transmembrane region" description="Helical" evidence="3">
    <location>
        <begin position="79"/>
        <end position="99"/>
    </location>
</feature>
<feature type="topological domain" description="Cytoplasmic" evidence="3">
    <location>
        <begin position="100"/>
        <end position="216"/>
    </location>
</feature>
<feature type="transmembrane region" description="Helical" evidence="3">
    <location>
        <begin position="217"/>
        <end position="237"/>
    </location>
</feature>
<feature type="topological domain" description="Extracellular" evidence="3">
    <location>
        <begin position="238"/>
        <end position="265"/>
    </location>
</feature>
<feature type="transmembrane region" description="Helical" evidence="3">
    <location>
        <begin position="266"/>
        <end position="286"/>
    </location>
</feature>
<feature type="topological domain" description="Cytoplasmic" evidence="3">
    <location>
        <begin position="287"/>
        <end position="439"/>
    </location>
</feature>
<feature type="region of interest" description="Disordered" evidence="4">
    <location>
        <begin position="108"/>
        <end position="178"/>
    </location>
</feature>
<feature type="region of interest" description="Disordered" evidence="4">
    <location>
        <begin position="364"/>
        <end position="439"/>
    </location>
</feature>
<feature type="compositionally biased region" description="Basic residues" evidence="4">
    <location>
        <begin position="112"/>
        <end position="125"/>
    </location>
</feature>
<feature type="compositionally biased region" description="Acidic residues" evidence="4">
    <location>
        <begin position="140"/>
        <end position="174"/>
    </location>
</feature>
<feature type="compositionally biased region" description="Low complexity" evidence="4">
    <location>
        <begin position="378"/>
        <end position="393"/>
    </location>
</feature>
<feature type="modified residue" description="Phosphoserine" evidence="2">
    <location>
        <position position="371"/>
    </location>
</feature>
<feature type="sequence variant" id="VAR_063876" description="Associated with lymphedema in a small family; dbSNP:rs149590094." evidence="7">
    <original>H</original>
    <variation>P</variation>
    <location>
        <position position="19"/>
    </location>
</feature>
<feature type="sequence variant" id="VAR_063172" description="In SPG44; does not form functional homotypic channels; dbSNP:rs75469429." evidence="6">
    <original>I</original>
    <variation>M</variation>
    <location>
        <position position="36"/>
    </location>
</feature>
<feature type="sequence variant" id="VAR_063877" description="In LMPHM3; dbSNP:rs267606847." evidence="7">
    <original>S</original>
    <variation>L</variation>
    <location>
        <position position="48"/>
    </location>
</feature>
<feature type="sequence variant" id="VAR_023754" description="In HLD2; dbSNP:rs74315312." evidence="5">
    <original>P</original>
    <variation>S</variation>
    <location>
        <position position="90"/>
    </location>
</feature>
<feature type="sequence variant" id="VAR_063878" description="Associated with lymphedema in a small family." evidence="7">
    <original>R</original>
    <variation>Q</variation>
    <location>
        <position position="125"/>
    </location>
</feature>
<feature type="sequence variant" id="VAR_063879" description="Associated with lymphedema in a small family; dbSNP:rs577325764." evidence="7">
    <original>G</original>
    <variation>S</variation>
    <location>
        <position position="149"/>
    </location>
</feature>
<feature type="sequence variant" id="VAR_063880" description="In LMPHM3; dbSNP:rs267606846." evidence="7">
    <original>R</original>
    <variation>C</variation>
    <location>
        <position position="260"/>
    </location>
</feature>
<feature type="sequence variant" id="VAR_023755" description="In HLD2; dbSNP:rs74315314." evidence="5">
    <original>Y</original>
    <variation>D</variation>
    <location>
        <position position="272"/>
    </location>
</feature>
<feature type="sequence variant" id="VAR_023756" description="In HLD2; dbSNP:rs74315311." evidence="5">
    <original>M</original>
    <variation>T</variation>
    <location>
        <position position="286"/>
    </location>
</feature>
<feature type="sequence variant" id="VAR_063881" description="Associated with lymphedema in a small family; dbSNP:rs760502262." evidence="7">
    <original>P</original>
    <variation>L</variation>
    <location>
        <position position="316"/>
    </location>
</feature>
<feature type="sequence conflict" description="In Ref. 1; AAB94511." evidence="8" ref="1">
    <original>Q</original>
    <variation>H</variation>
    <location>
        <position position="83"/>
    </location>
</feature>
<feature type="sequence conflict" description="In Ref. 1; AAB94511." evidence="8" ref="1">
    <original>H</original>
    <variation>Q</variation>
    <location>
        <position position="252"/>
    </location>
</feature>
<dbReference type="EMBL" id="AF014643">
    <property type="protein sequence ID" value="AAB94511.1"/>
    <property type="status" value="ALT_INIT"/>
    <property type="molecule type" value="Genomic_DNA"/>
</dbReference>
<dbReference type="EMBL" id="AL359510">
    <property type="status" value="NOT_ANNOTATED_CDS"/>
    <property type="molecule type" value="Genomic_DNA"/>
</dbReference>
<dbReference type="EMBL" id="BC035840">
    <property type="protein sequence ID" value="AAH35840.1"/>
    <property type="status" value="ALT_INIT"/>
    <property type="molecule type" value="mRNA"/>
</dbReference>
<dbReference type="EMBL" id="BC089439">
    <property type="protein sequence ID" value="AAH89439.1"/>
    <property type="molecule type" value="mRNA"/>
</dbReference>
<dbReference type="EMBL" id="AY285161">
    <property type="protein sequence ID" value="AAP37488.1"/>
    <property type="molecule type" value="mRNA"/>
</dbReference>
<dbReference type="CCDS" id="CCDS1569.1"/>
<dbReference type="RefSeq" id="NP_065168.2">
    <property type="nucleotide sequence ID" value="NM_020435.3"/>
</dbReference>
<dbReference type="SMR" id="Q5T442"/>
<dbReference type="BioGRID" id="121419">
    <property type="interactions" value="8"/>
</dbReference>
<dbReference type="FunCoup" id="Q5T442">
    <property type="interactions" value="6"/>
</dbReference>
<dbReference type="IntAct" id="Q5T442">
    <property type="interactions" value="7"/>
</dbReference>
<dbReference type="MINT" id="Q5T442"/>
<dbReference type="STRING" id="9606.ENSP00000355675"/>
<dbReference type="GlyGen" id="Q5T442">
    <property type="glycosylation" value="3 sites, 1 O-linked glycan (1 site)"/>
</dbReference>
<dbReference type="iPTMnet" id="Q5T442"/>
<dbReference type="PhosphoSitePlus" id="Q5T442"/>
<dbReference type="BioMuta" id="GJC2"/>
<dbReference type="DMDM" id="74744875"/>
<dbReference type="MassIVE" id="Q5T442"/>
<dbReference type="PaxDb" id="9606-ENSP00000355675"/>
<dbReference type="PeptideAtlas" id="Q5T442"/>
<dbReference type="ProteomicsDB" id="64429"/>
<dbReference type="Antibodypedia" id="34662">
    <property type="antibodies" value="191 antibodies from 28 providers"/>
</dbReference>
<dbReference type="DNASU" id="57165"/>
<dbReference type="Ensembl" id="ENST00000366714.3">
    <property type="protein sequence ID" value="ENSP00000355675.2"/>
    <property type="gene ID" value="ENSG00000198835.4"/>
</dbReference>
<dbReference type="GeneID" id="57165"/>
<dbReference type="KEGG" id="hsa:57165"/>
<dbReference type="MANE-Select" id="ENST00000366714.3">
    <property type="protein sequence ID" value="ENSP00000355675.2"/>
    <property type="RefSeq nucleotide sequence ID" value="NM_020435.4"/>
    <property type="RefSeq protein sequence ID" value="NP_065168.2"/>
</dbReference>
<dbReference type="UCSC" id="uc001hsk.4">
    <property type="organism name" value="human"/>
</dbReference>
<dbReference type="AGR" id="HGNC:17494"/>
<dbReference type="CTD" id="57165"/>
<dbReference type="DisGeNET" id="57165"/>
<dbReference type="GeneCards" id="GJC2"/>
<dbReference type="GeneReviews" id="GJC2"/>
<dbReference type="HGNC" id="HGNC:17494">
    <property type="gene designation" value="GJC2"/>
</dbReference>
<dbReference type="HPA" id="ENSG00000198835">
    <property type="expression patterns" value="Tissue enriched (brain)"/>
</dbReference>
<dbReference type="MalaCards" id="GJC2"/>
<dbReference type="MIM" id="608803">
    <property type="type" value="gene"/>
</dbReference>
<dbReference type="MIM" id="608804">
    <property type="type" value="phenotype"/>
</dbReference>
<dbReference type="MIM" id="613206">
    <property type="type" value="phenotype"/>
</dbReference>
<dbReference type="MIM" id="613480">
    <property type="type" value="phenotype"/>
</dbReference>
<dbReference type="neXtProt" id="NX_Q5T442"/>
<dbReference type="OpenTargets" id="ENSG00000198835"/>
<dbReference type="Orphanet" id="320401">
    <property type="disease" value="Autosomal recessive spastic paraplegia type 44"/>
</dbReference>
<dbReference type="Orphanet" id="568051">
    <property type="disease" value="GJC2-related late-onset primary lymphedema"/>
</dbReference>
<dbReference type="Orphanet" id="280282">
    <property type="disease" value="Pelizaeus-Merzbacher-like disease due to GJC2 mutation"/>
</dbReference>
<dbReference type="PharmGKB" id="PA162389696"/>
<dbReference type="VEuPathDB" id="HostDB:ENSG00000198835"/>
<dbReference type="eggNOG" id="ENOG502QV2G">
    <property type="taxonomic scope" value="Eukaryota"/>
</dbReference>
<dbReference type="GeneTree" id="ENSGT01130000278276"/>
<dbReference type="HOGENOM" id="CLU_037388_4_0_1"/>
<dbReference type="InParanoid" id="Q5T442"/>
<dbReference type="OMA" id="ACTKGAG"/>
<dbReference type="OrthoDB" id="10061722at2759"/>
<dbReference type="PAN-GO" id="Q5T442">
    <property type="GO annotations" value="3 GO annotations based on evolutionary models"/>
</dbReference>
<dbReference type="PhylomeDB" id="Q5T442"/>
<dbReference type="TreeFam" id="TF329606"/>
<dbReference type="PathwayCommons" id="Q5T442"/>
<dbReference type="Reactome" id="R-HSA-190861">
    <property type="pathway name" value="Gap junction assembly"/>
</dbReference>
<dbReference type="SignaLink" id="Q5T442"/>
<dbReference type="BioGRID-ORCS" id="57165">
    <property type="hits" value="10 hits in 1140 CRISPR screens"/>
</dbReference>
<dbReference type="GeneWiki" id="GJC2"/>
<dbReference type="GenomeRNAi" id="57165"/>
<dbReference type="Pharos" id="Q5T442">
    <property type="development level" value="Tbio"/>
</dbReference>
<dbReference type="PRO" id="PR:Q5T442"/>
<dbReference type="Proteomes" id="UP000005640">
    <property type="component" value="Chromosome 1"/>
</dbReference>
<dbReference type="RNAct" id="Q5T442">
    <property type="molecule type" value="protein"/>
</dbReference>
<dbReference type="Bgee" id="ENSG00000198835">
    <property type="expression patterns" value="Expressed in C1 segment of cervical spinal cord and 143 other cell types or tissues"/>
</dbReference>
<dbReference type="ExpressionAtlas" id="Q5T442">
    <property type="expression patterns" value="baseline and differential"/>
</dbReference>
<dbReference type="GO" id="GO:0005922">
    <property type="term" value="C:connexin complex"/>
    <property type="evidence" value="ECO:0000318"/>
    <property type="project" value="GO_Central"/>
</dbReference>
<dbReference type="GO" id="GO:0005921">
    <property type="term" value="C:gap junction"/>
    <property type="evidence" value="ECO:0000315"/>
    <property type="project" value="UniProtKB"/>
</dbReference>
<dbReference type="GO" id="GO:0043209">
    <property type="term" value="C:myelin sheath"/>
    <property type="evidence" value="ECO:0007669"/>
    <property type="project" value="Ensembl"/>
</dbReference>
<dbReference type="GO" id="GO:0005243">
    <property type="term" value="F:gap junction channel activity"/>
    <property type="evidence" value="ECO:0000318"/>
    <property type="project" value="GO_Central"/>
</dbReference>
<dbReference type="GO" id="GO:1903763">
    <property type="term" value="F:gap junction channel activity involved in cell communication by electrical coupling"/>
    <property type="evidence" value="ECO:0000315"/>
    <property type="project" value="UniProtKB"/>
</dbReference>
<dbReference type="GO" id="GO:0010644">
    <property type="term" value="P:cell communication by electrical coupling"/>
    <property type="evidence" value="ECO:0000315"/>
    <property type="project" value="UniProtKB"/>
</dbReference>
<dbReference type="GO" id="GO:0007267">
    <property type="term" value="P:cell-cell signaling"/>
    <property type="evidence" value="ECO:0000318"/>
    <property type="project" value="GO_Central"/>
</dbReference>
<dbReference type="GO" id="GO:0009636">
    <property type="term" value="P:response to toxic substance"/>
    <property type="evidence" value="ECO:0007669"/>
    <property type="project" value="Ensembl"/>
</dbReference>
<dbReference type="Gene3D" id="1.20.1440.80">
    <property type="entry name" value="Gap junction channel protein cysteine-rich domain"/>
    <property type="match status" value="1"/>
</dbReference>
<dbReference type="InterPro" id="IPR000500">
    <property type="entry name" value="Connexin"/>
</dbReference>
<dbReference type="InterPro" id="IPR019570">
    <property type="entry name" value="Connexin_CCC"/>
</dbReference>
<dbReference type="InterPro" id="IPR017990">
    <property type="entry name" value="Connexin_CS"/>
</dbReference>
<dbReference type="InterPro" id="IPR013092">
    <property type="entry name" value="Connexin_N"/>
</dbReference>
<dbReference type="InterPro" id="IPR038359">
    <property type="entry name" value="Connexin_N_sf"/>
</dbReference>
<dbReference type="PANTHER" id="PTHR11984">
    <property type="entry name" value="CONNEXIN"/>
    <property type="match status" value="1"/>
</dbReference>
<dbReference type="PANTHER" id="PTHR11984:SF52">
    <property type="entry name" value="GAP JUNCTION GAMMA-2 PROTEIN"/>
    <property type="match status" value="1"/>
</dbReference>
<dbReference type="Pfam" id="PF00029">
    <property type="entry name" value="Connexin"/>
    <property type="match status" value="1"/>
</dbReference>
<dbReference type="PRINTS" id="PR00206">
    <property type="entry name" value="CONNEXIN"/>
</dbReference>
<dbReference type="SMART" id="SM00037">
    <property type="entry name" value="CNX"/>
    <property type="match status" value="1"/>
</dbReference>
<dbReference type="SMART" id="SM01089">
    <property type="entry name" value="Connexin_CCC"/>
    <property type="match status" value="1"/>
</dbReference>
<dbReference type="PROSITE" id="PS00407">
    <property type="entry name" value="CONNEXINS_1"/>
    <property type="match status" value="1"/>
</dbReference>
<dbReference type="PROSITE" id="PS00408">
    <property type="entry name" value="CONNEXINS_2"/>
    <property type="match status" value="1"/>
</dbReference>
<protein>
    <recommendedName>
        <fullName>Gap junction gamma-2 protein</fullName>
    </recommendedName>
    <alternativeName>
        <fullName>Connexin-46.6</fullName>
        <shortName>Cx46.6</shortName>
    </alternativeName>
    <alternativeName>
        <fullName>Connexin-47</fullName>
        <shortName>Cx47</shortName>
    </alternativeName>
    <alternativeName>
        <fullName>Gap junction alpha-12 protein</fullName>
    </alternativeName>
</protein>
<name>CXG2_HUMAN</name>
<keyword id="KW-0965">Cell junction</keyword>
<keyword id="KW-1003">Cell membrane</keyword>
<keyword id="KW-0225">Disease variant</keyword>
<keyword id="KW-0303">Gap junction</keyword>
<keyword id="KW-0890">Hereditary spastic paraplegia</keyword>
<keyword id="KW-1026">Leukodystrophy</keyword>
<keyword id="KW-0472">Membrane</keyword>
<keyword id="KW-0523">Neurodegeneration</keyword>
<keyword id="KW-0597">Phosphoprotein</keyword>
<keyword id="KW-1267">Proteomics identification</keyword>
<keyword id="KW-1185">Reference proteome</keyword>
<keyword id="KW-0812">Transmembrane</keyword>
<keyword id="KW-1133">Transmembrane helix</keyword>
<reference key="1">
    <citation type="submission" date="1997-07" db="EMBL/GenBank/DDBJ databases">
        <title>Cloning and molecular characterization of human connexin46.6, a new gap junction gene.</title>
        <authorList>
            <person name="Bloemker B.K."/>
            <person name="Swaroop A."/>
            <person name="Kimberling W.J."/>
        </authorList>
    </citation>
    <scope>NUCLEOTIDE SEQUENCE [GENOMIC DNA]</scope>
</reference>
<reference key="2">
    <citation type="journal article" date="2006" name="Nature">
        <title>The DNA sequence and biological annotation of human chromosome 1.</title>
        <authorList>
            <person name="Gregory S.G."/>
            <person name="Barlow K.F."/>
            <person name="McLay K.E."/>
            <person name="Kaul R."/>
            <person name="Swarbreck D."/>
            <person name="Dunham A."/>
            <person name="Scott C.E."/>
            <person name="Howe K.L."/>
            <person name="Woodfine K."/>
            <person name="Spencer C.C.A."/>
            <person name="Jones M.C."/>
            <person name="Gillson C."/>
            <person name="Searle S."/>
            <person name="Zhou Y."/>
            <person name="Kokocinski F."/>
            <person name="McDonald L."/>
            <person name="Evans R."/>
            <person name="Phillips K."/>
            <person name="Atkinson A."/>
            <person name="Cooper R."/>
            <person name="Jones C."/>
            <person name="Hall R.E."/>
            <person name="Andrews T.D."/>
            <person name="Lloyd C."/>
            <person name="Ainscough R."/>
            <person name="Almeida J.P."/>
            <person name="Ambrose K.D."/>
            <person name="Anderson F."/>
            <person name="Andrew R.W."/>
            <person name="Ashwell R.I.S."/>
            <person name="Aubin K."/>
            <person name="Babbage A.K."/>
            <person name="Bagguley C.L."/>
            <person name="Bailey J."/>
            <person name="Beasley H."/>
            <person name="Bethel G."/>
            <person name="Bird C.P."/>
            <person name="Bray-Allen S."/>
            <person name="Brown J.Y."/>
            <person name="Brown A.J."/>
            <person name="Buckley D."/>
            <person name="Burton J."/>
            <person name="Bye J."/>
            <person name="Carder C."/>
            <person name="Chapman J.C."/>
            <person name="Clark S.Y."/>
            <person name="Clarke G."/>
            <person name="Clee C."/>
            <person name="Cobley V."/>
            <person name="Collier R.E."/>
            <person name="Corby N."/>
            <person name="Coville G.J."/>
            <person name="Davies J."/>
            <person name="Deadman R."/>
            <person name="Dunn M."/>
            <person name="Earthrowl M."/>
            <person name="Ellington A.G."/>
            <person name="Errington H."/>
            <person name="Frankish A."/>
            <person name="Frankland J."/>
            <person name="French L."/>
            <person name="Garner P."/>
            <person name="Garnett J."/>
            <person name="Gay L."/>
            <person name="Ghori M.R.J."/>
            <person name="Gibson R."/>
            <person name="Gilby L.M."/>
            <person name="Gillett W."/>
            <person name="Glithero R.J."/>
            <person name="Grafham D.V."/>
            <person name="Griffiths C."/>
            <person name="Griffiths-Jones S."/>
            <person name="Grocock R."/>
            <person name="Hammond S."/>
            <person name="Harrison E.S.I."/>
            <person name="Hart E."/>
            <person name="Haugen E."/>
            <person name="Heath P.D."/>
            <person name="Holmes S."/>
            <person name="Holt K."/>
            <person name="Howden P.J."/>
            <person name="Hunt A.R."/>
            <person name="Hunt S.E."/>
            <person name="Hunter G."/>
            <person name="Isherwood J."/>
            <person name="James R."/>
            <person name="Johnson C."/>
            <person name="Johnson D."/>
            <person name="Joy A."/>
            <person name="Kay M."/>
            <person name="Kershaw J.K."/>
            <person name="Kibukawa M."/>
            <person name="Kimberley A.M."/>
            <person name="King A."/>
            <person name="Knights A.J."/>
            <person name="Lad H."/>
            <person name="Laird G."/>
            <person name="Lawlor S."/>
            <person name="Leongamornlert D.A."/>
            <person name="Lloyd D.M."/>
            <person name="Loveland J."/>
            <person name="Lovell J."/>
            <person name="Lush M.J."/>
            <person name="Lyne R."/>
            <person name="Martin S."/>
            <person name="Mashreghi-Mohammadi M."/>
            <person name="Matthews L."/>
            <person name="Matthews N.S.W."/>
            <person name="McLaren S."/>
            <person name="Milne S."/>
            <person name="Mistry S."/>
            <person name="Moore M.J.F."/>
            <person name="Nickerson T."/>
            <person name="O'Dell C.N."/>
            <person name="Oliver K."/>
            <person name="Palmeiri A."/>
            <person name="Palmer S.A."/>
            <person name="Parker A."/>
            <person name="Patel D."/>
            <person name="Pearce A.V."/>
            <person name="Peck A.I."/>
            <person name="Pelan S."/>
            <person name="Phelps K."/>
            <person name="Phillimore B.J."/>
            <person name="Plumb R."/>
            <person name="Rajan J."/>
            <person name="Raymond C."/>
            <person name="Rouse G."/>
            <person name="Saenphimmachak C."/>
            <person name="Sehra H.K."/>
            <person name="Sheridan E."/>
            <person name="Shownkeen R."/>
            <person name="Sims S."/>
            <person name="Skuce C.D."/>
            <person name="Smith M."/>
            <person name="Steward C."/>
            <person name="Subramanian S."/>
            <person name="Sycamore N."/>
            <person name="Tracey A."/>
            <person name="Tromans A."/>
            <person name="Van Helmond Z."/>
            <person name="Wall M."/>
            <person name="Wallis J.M."/>
            <person name="White S."/>
            <person name="Whitehead S.L."/>
            <person name="Wilkinson J.E."/>
            <person name="Willey D.L."/>
            <person name="Williams H."/>
            <person name="Wilming L."/>
            <person name="Wray P.W."/>
            <person name="Wu Z."/>
            <person name="Coulson A."/>
            <person name="Vaudin M."/>
            <person name="Sulston J.E."/>
            <person name="Durbin R.M."/>
            <person name="Hubbard T."/>
            <person name="Wooster R."/>
            <person name="Dunham I."/>
            <person name="Carter N.P."/>
            <person name="McVean G."/>
            <person name="Ross M.T."/>
            <person name="Harrow J."/>
            <person name="Olson M.V."/>
            <person name="Beck S."/>
            <person name="Rogers J."/>
            <person name="Bentley D.R."/>
        </authorList>
    </citation>
    <scope>NUCLEOTIDE SEQUENCE [LARGE SCALE GENOMIC DNA]</scope>
</reference>
<reference key="3">
    <citation type="journal article" date="2004" name="Genome Res.">
        <title>The status, quality, and expansion of the NIH full-length cDNA project: the Mammalian Gene Collection (MGC).</title>
        <authorList>
            <consortium name="The MGC Project Team"/>
        </authorList>
    </citation>
    <scope>NUCLEOTIDE SEQUENCE [LARGE SCALE MRNA]</scope>
    <source>
        <tissue>Brain</tissue>
        <tissue>Chondrosarcoma</tissue>
    </source>
</reference>
<reference key="4">
    <citation type="submission" date="2003-04" db="EMBL/GenBank/DDBJ databases">
        <title>Human connexin47, updated ORF.</title>
        <authorList>
            <person name="Enriquez A.D."/>
            <person name="Scherer S.S."/>
        </authorList>
    </citation>
    <scope>NUCLEOTIDE SEQUENCE [MRNA] OF 4-439</scope>
    <source>
        <tissue>Corpus callosum</tissue>
    </source>
</reference>
<reference key="5">
    <citation type="journal article" date="2004" name="Am. J. Hum. Genet.">
        <title>Mutations in the gene encoding gap junction protein alpha 12 (connexin 46.6) cause Pelizaeus-Merzbacher-like disease.</title>
        <authorList>
            <person name="Uhlenberg B."/>
            <person name="Schuelke M."/>
            <person name="Rueschendorf F."/>
            <person name="Ruf N."/>
            <person name="Kaindl A.M."/>
            <person name="Henneke M."/>
            <person name="Thiele H."/>
            <person name="Stoltenburg-Didinger G."/>
            <person name="Aksu F."/>
            <person name="Topaloglu H."/>
            <person name="Nuernberg P."/>
            <person name="Huebner C."/>
            <person name="Weschke B."/>
            <person name="Gaertner J."/>
        </authorList>
    </citation>
    <scope>FUNCTION</scope>
    <scope>DISEASE</scope>
    <scope>VARIANTS HLD2 SER-90; ASP-272 AND THR-286</scope>
    <scope>TISSUE SPECIFICITY</scope>
</reference>
<reference key="6">
    <citation type="journal article" date="2004" name="Am. J. Hum. Genet.">
        <authorList>
            <person name="Uhlenberg B."/>
            <person name="Schuelke M."/>
            <person name="Rueschendorf F."/>
            <person name="Ruf N."/>
            <person name="Kaindl A.M."/>
            <person name="Henneke M."/>
            <person name="Thiele H."/>
            <person name="Stoltenburg-Didinger G."/>
            <person name="Aksu F."/>
            <person name="Topaloglu H."/>
            <person name="Nuernberg P."/>
            <person name="Huebner C."/>
            <person name="Weschke B."/>
            <person name="Gaertner J."/>
        </authorList>
    </citation>
    <scope>ERRATUM OF PUBMED:15192806</scope>
</reference>
<reference key="7">
    <citation type="journal article" date="2009" name="Brain">
        <title>Hereditary spastic paraplegia is a novel phenotype for GJA12/GJC2 mutations.</title>
        <authorList>
            <person name="Orthmann-Murphy J.L."/>
            <person name="Salsano E."/>
            <person name="Abrams C.K."/>
            <person name="Bizzi A."/>
            <person name="Uziel G."/>
            <person name="Freidin M.M."/>
            <person name="Lamantea E."/>
            <person name="Zeviani M."/>
            <person name="Scherer S.S."/>
            <person name="Pareyson D."/>
        </authorList>
    </citation>
    <scope>VARIANT SPG44 MET-36</scope>
    <scope>CHARACTERIZATION OF VARIANT SPG44 MET-36</scope>
</reference>
<reference key="8">
    <citation type="journal article" date="2010" name="Am. J. Hum. Genet.">
        <title>GJC2 missense mutations cause human lymphedema.</title>
        <authorList>
            <person name="Ferrell R.E."/>
            <person name="Baty C.J."/>
            <person name="Kimak M.A."/>
            <person name="Karlsson J.M."/>
            <person name="Lawrence E.C."/>
            <person name="Franke-Snyder M."/>
            <person name="Meriney S.D."/>
            <person name="Feingold E."/>
            <person name="Finegold D.N."/>
        </authorList>
    </citation>
    <scope>VARIANTS LMPHM3 LEU-48 AND CYS-260</scope>
    <scope>VARIANTS PRO-19; GLN-125; SER-149 AND LEU-316</scope>
</reference>